<proteinExistence type="evidence at protein level"/>
<sequence length="90" mass="10322">MIEKRNFALRDKEGNEIGVFSGKQPRQAALKAANRGFTDIRLRERGTKKVHIFQGERIQVPKPSNAPKWMPANIWKPNVKKLGVEKLEDI</sequence>
<comment type="function">
    <text>Protects DNA against thermal denaturation and modulates transcription.</text>
</comment>
<keyword id="KW-0903">Direct protein sequencing</keyword>
<keyword id="KW-0238">DNA-binding</keyword>
<organism>
    <name type="scientific">Methanothrix soehngenii</name>
    <name type="common">Methanosaeta concilii</name>
    <dbReference type="NCBI Taxonomy" id="2223"/>
    <lineage>
        <taxon>Archaea</taxon>
        <taxon>Methanobacteriati</taxon>
        <taxon>Methanobacteriota</taxon>
        <taxon>Stenosarchaea group</taxon>
        <taxon>Methanomicrobia</taxon>
        <taxon>Methanotrichales</taxon>
        <taxon>Methanotrichaceae</taxon>
        <taxon>Methanothrix</taxon>
    </lineage>
</organism>
<protein>
    <recommendedName>
        <fullName>Chromosomal protein MC1c</fullName>
    </recommendedName>
</protein>
<feature type="chain" id="PRO_0000084001" description="Chromosomal protein MC1c">
    <location>
        <begin position="1"/>
        <end position="90"/>
    </location>
</feature>
<name>HMC1C_METSH</name>
<accession>P15251</accession>
<reference key="1">
    <citation type="journal article" date="1989" name="J. Biol. Chem.">
        <title>Primary structure of the chromosomal proteins MC1a, MC1b, and MC1c from the archaebacterium Methanothrix soehngenii.</title>
        <authorList>
            <person name="Chartier F."/>
            <person name="Laine B."/>
            <person name="Belaiche D."/>
            <person name="Sautiere P."/>
        </authorList>
    </citation>
    <scope>PROTEIN SEQUENCE</scope>
</reference>
<dbReference type="PIR" id="C34455">
    <property type="entry name" value="C34455"/>
</dbReference>
<dbReference type="RefSeq" id="WP_048133311.1">
    <property type="nucleotide sequence ID" value="NZ_JBCEYR010000071.1"/>
</dbReference>
<dbReference type="SMR" id="P15251"/>
<dbReference type="GeneID" id="10462225"/>
<dbReference type="GO" id="GO:0003677">
    <property type="term" value="F:DNA binding"/>
    <property type="evidence" value="ECO:0007669"/>
    <property type="project" value="UniProtKB-KW"/>
</dbReference>
<dbReference type="GO" id="GO:0042262">
    <property type="term" value="P:DNA protection"/>
    <property type="evidence" value="ECO:0007669"/>
    <property type="project" value="InterPro"/>
</dbReference>
<dbReference type="Gene3D" id="3.10.470.10">
    <property type="entry name" value="Chromosomal protein MC1"/>
    <property type="match status" value="1"/>
</dbReference>
<dbReference type="InterPro" id="IPR008674">
    <property type="entry name" value="MC1"/>
</dbReference>
<dbReference type="InterPro" id="IPR036620">
    <property type="entry name" value="MC1_sf"/>
</dbReference>
<dbReference type="Pfam" id="PF05854">
    <property type="entry name" value="MC1"/>
    <property type="match status" value="1"/>
</dbReference>
<dbReference type="SUPFAM" id="SSF102875">
    <property type="entry name" value="Chromosomal protein MC1"/>
    <property type="match status" value="1"/>
</dbReference>